<organism>
    <name type="scientific">Tetradesmus obliquus</name>
    <name type="common">Green alga</name>
    <name type="synonym">Acutodesmus obliquus</name>
    <dbReference type="NCBI Taxonomy" id="3088"/>
    <lineage>
        <taxon>Eukaryota</taxon>
        <taxon>Viridiplantae</taxon>
        <taxon>Chlorophyta</taxon>
        <taxon>core chlorophytes</taxon>
        <taxon>Chlorophyceae</taxon>
        <taxon>CS clade</taxon>
        <taxon>Sphaeropleales</taxon>
        <taxon>Scenedesmaceae</taxon>
        <taxon>Tetradesmus</taxon>
    </lineage>
</organism>
<gene>
    <name evidence="1" type="primary">psbT</name>
</gene>
<evidence type="ECO:0000255" key="1">
    <source>
        <dbReference type="HAMAP-Rule" id="MF_00808"/>
    </source>
</evidence>
<sequence>MEALVYTFLLIGTLGIIFFAIFFREPPRMVK</sequence>
<feature type="chain" id="PRO_0000276311" description="Photosystem II reaction center protein T">
    <location>
        <begin position="1"/>
        <end position="31"/>
    </location>
</feature>
<feature type="transmembrane region" description="Helical" evidence="1">
    <location>
        <begin position="3"/>
        <end position="23"/>
    </location>
</feature>
<name>PSBT_TETOB</name>
<accession>Q1KVV5</accession>
<geneLocation type="chloroplast"/>
<proteinExistence type="inferred from homology"/>
<reference key="1">
    <citation type="journal article" date="2006" name="BMC Evol. Biol.">
        <title>The complete chloroplast genome sequence of the chlorophycean green alga Scenedesmus obliquus reveals a compact gene organization and a biased distribution of genes on the two DNA strands.</title>
        <authorList>
            <person name="de Cambiaire J.-C."/>
            <person name="Otis C."/>
            <person name="Lemieux C."/>
            <person name="Turmel M."/>
        </authorList>
    </citation>
    <scope>NUCLEOTIDE SEQUENCE [LARGE SCALE GENOMIC DNA]</scope>
    <source>
        <strain>UTEX 393</strain>
    </source>
</reference>
<protein>
    <recommendedName>
        <fullName evidence="1">Photosystem II reaction center protein T</fullName>
        <shortName evidence="1">PSII-T</shortName>
    </recommendedName>
</protein>
<comment type="function">
    <text evidence="1">Found at the monomer-monomer interface of the photosystem II (PS II) dimer, plays a role in assembly and dimerization of PSII. PSII is a light-driven water plastoquinone oxidoreductase, using light energy to abstract electrons from H(2)O, generating a proton gradient subsequently used for ATP formation.</text>
</comment>
<comment type="subunit">
    <text evidence="1">PSII is composed of 1 copy each of membrane proteins PsbA, PsbB, PsbC, PsbD, PsbE, PsbF, PsbH, PsbI, PsbJ, PsbK, PsbL, PsbM, PsbT, PsbY, PsbZ, Psb30/Ycf12, at least 3 peripheral proteins of the oxygen-evolving complex and a large number of cofactors. It forms dimeric complexes.</text>
</comment>
<comment type="subcellular location">
    <subcellularLocation>
        <location evidence="1">Plastid</location>
        <location evidence="1">Chloroplast thylakoid membrane</location>
        <topology evidence="1">Single-pass membrane protein</topology>
    </subcellularLocation>
</comment>
<comment type="similarity">
    <text evidence="1">Belongs to the PsbT family.</text>
</comment>
<dbReference type="EMBL" id="DQ396875">
    <property type="protein sequence ID" value="ABD48252.1"/>
    <property type="molecule type" value="Genomic_DNA"/>
</dbReference>
<dbReference type="RefSeq" id="YP_635969.1">
    <property type="nucleotide sequence ID" value="NC_008101.1"/>
</dbReference>
<dbReference type="SMR" id="Q1KVV5"/>
<dbReference type="GeneID" id="4099752"/>
<dbReference type="GO" id="GO:0009535">
    <property type="term" value="C:chloroplast thylakoid membrane"/>
    <property type="evidence" value="ECO:0007669"/>
    <property type="project" value="UniProtKB-SubCell"/>
</dbReference>
<dbReference type="GO" id="GO:0009539">
    <property type="term" value="C:photosystem II reaction center"/>
    <property type="evidence" value="ECO:0007669"/>
    <property type="project" value="InterPro"/>
</dbReference>
<dbReference type="GO" id="GO:0015979">
    <property type="term" value="P:photosynthesis"/>
    <property type="evidence" value="ECO:0007669"/>
    <property type="project" value="UniProtKB-UniRule"/>
</dbReference>
<dbReference type="HAMAP" id="MF_00808">
    <property type="entry name" value="PSII_PsbT"/>
    <property type="match status" value="1"/>
</dbReference>
<dbReference type="InterPro" id="IPR001743">
    <property type="entry name" value="PSII_PsbT"/>
</dbReference>
<dbReference type="InterPro" id="IPR037268">
    <property type="entry name" value="PSII_PsbT_sf"/>
</dbReference>
<dbReference type="PANTHER" id="PTHR36411">
    <property type="match status" value="1"/>
</dbReference>
<dbReference type="PANTHER" id="PTHR36411:SF2">
    <property type="entry name" value="PHOTOSYSTEM II REACTION CENTER PROTEIN T"/>
    <property type="match status" value="1"/>
</dbReference>
<dbReference type="Pfam" id="PF01405">
    <property type="entry name" value="PsbT"/>
    <property type="match status" value="1"/>
</dbReference>
<dbReference type="SUPFAM" id="SSF161029">
    <property type="entry name" value="Photosystem II reaction center protein T, PsbT"/>
    <property type="match status" value="1"/>
</dbReference>
<keyword id="KW-0150">Chloroplast</keyword>
<keyword id="KW-0472">Membrane</keyword>
<keyword id="KW-0602">Photosynthesis</keyword>
<keyword id="KW-0604">Photosystem II</keyword>
<keyword id="KW-0934">Plastid</keyword>
<keyword id="KW-0793">Thylakoid</keyword>
<keyword id="KW-0812">Transmembrane</keyword>
<keyword id="KW-1133">Transmembrane helix</keyword>